<gene>
    <name type="primary">EGY1</name>
    <name type="ordered locus">Os03g0792400</name>
    <name type="ordered locus">LOC_Os03g57840</name>
    <name type="ORF">OSJNBb0060J21.23</name>
</gene>
<reference key="1">
    <citation type="journal article" date="2005" name="Genome Res.">
        <title>Sequence, annotation, and analysis of synteny between rice chromosome 3 and diverged grass species.</title>
        <authorList>
            <consortium name="The rice chromosome 3 sequencing consortium"/>
            <person name="Buell C.R."/>
            <person name="Yuan Q."/>
            <person name="Ouyang S."/>
            <person name="Liu J."/>
            <person name="Zhu W."/>
            <person name="Wang A."/>
            <person name="Maiti R."/>
            <person name="Haas B."/>
            <person name="Wortman J."/>
            <person name="Pertea M."/>
            <person name="Jones K.M."/>
            <person name="Kim M."/>
            <person name="Overton L."/>
            <person name="Tsitrin T."/>
            <person name="Fadrosh D."/>
            <person name="Bera J."/>
            <person name="Weaver B."/>
            <person name="Jin S."/>
            <person name="Johri S."/>
            <person name="Reardon M."/>
            <person name="Webb K."/>
            <person name="Hill J."/>
            <person name="Moffat K."/>
            <person name="Tallon L."/>
            <person name="Van Aken S."/>
            <person name="Lewis M."/>
            <person name="Utterback T."/>
            <person name="Feldblyum T."/>
            <person name="Zismann V."/>
            <person name="Iobst S."/>
            <person name="Hsiao J."/>
            <person name="de Vazeille A.R."/>
            <person name="Salzberg S.L."/>
            <person name="White O."/>
            <person name="Fraser C.M."/>
            <person name="Yu Y."/>
            <person name="Kim H."/>
            <person name="Rambo T."/>
            <person name="Currie J."/>
            <person name="Collura K."/>
            <person name="Kernodle-Thompson S."/>
            <person name="Wei F."/>
            <person name="Kudrna K."/>
            <person name="Ammiraju J.S.S."/>
            <person name="Luo M."/>
            <person name="Goicoechea J.L."/>
            <person name="Wing R.A."/>
            <person name="Henry D."/>
            <person name="Oates R."/>
            <person name="Palmer M."/>
            <person name="Pries G."/>
            <person name="Saski C."/>
            <person name="Simmons J."/>
            <person name="Soderlund C."/>
            <person name="Nelson W."/>
            <person name="de la Bastide M."/>
            <person name="Spiegel L."/>
            <person name="Nascimento L."/>
            <person name="Huang E."/>
            <person name="Preston R."/>
            <person name="Zutavern T."/>
            <person name="Palmer L."/>
            <person name="O'Shaughnessy A."/>
            <person name="Dike S."/>
            <person name="McCombie W.R."/>
            <person name="Minx P."/>
            <person name="Cordum H."/>
            <person name="Wilson R."/>
            <person name="Jin W."/>
            <person name="Lee H.R."/>
            <person name="Jiang J."/>
            <person name="Jackson S."/>
        </authorList>
    </citation>
    <scope>NUCLEOTIDE SEQUENCE [LARGE SCALE GENOMIC DNA]</scope>
    <source>
        <strain>cv. Nipponbare</strain>
    </source>
</reference>
<reference key="2">
    <citation type="journal article" date="2005" name="Nature">
        <title>The map-based sequence of the rice genome.</title>
        <authorList>
            <consortium name="International rice genome sequencing project (IRGSP)"/>
        </authorList>
    </citation>
    <scope>NUCLEOTIDE SEQUENCE [LARGE SCALE GENOMIC DNA]</scope>
    <source>
        <strain>cv. Nipponbare</strain>
    </source>
</reference>
<reference key="3">
    <citation type="journal article" date="2008" name="Nucleic Acids Res.">
        <title>The rice annotation project database (RAP-DB): 2008 update.</title>
        <authorList>
            <consortium name="The rice annotation project (RAP)"/>
        </authorList>
    </citation>
    <scope>GENOME REANNOTATION</scope>
    <source>
        <strain>cv. Nipponbare</strain>
    </source>
</reference>
<reference key="4">
    <citation type="journal article" date="2013" name="Rice">
        <title>Improvement of the Oryza sativa Nipponbare reference genome using next generation sequence and optical map data.</title>
        <authorList>
            <person name="Kawahara Y."/>
            <person name="de la Bastide M."/>
            <person name="Hamilton J.P."/>
            <person name="Kanamori H."/>
            <person name="McCombie W.R."/>
            <person name="Ouyang S."/>
            <person name="Schwartz D.C."/>
            <person name="Tanaka T."/>
            <person name="Wu J."/>
            <person name="Zhou S."/>
            <person name="Childs K.L."/>
            <person name="Davidson R.M."/>
            <person name="Lin H."/>
            <person name="Quesada-Ocampo L."/>
            <person name="Vaillancourt B."/>
            <person name="Sakai H."/>
            <person name="Lee S.S."/>
            <person name="Kim J."/>
            <person name="Numa H."/>
            <person name="Itoh T."/>
            <person name="Buell C.R."/>
            <person name="Matsumoto T."/>
        </authorList>
    </citation>
    <scope>GENOME REANNOTATION</scope>
    <source>
        <strain>cv. Nipponbare</strain>
    </source>
</reference>
<reference key="5">
    <citation type="journal article" date="2003" name="Science">
        <title>Collection, mapping, and annotation of over 28,000 cDNA clones from japonica rice.</title>
        <authorList>
            <consortium name="The rice full-length cDNA consortium"/>
        </authorList>
    </citation>
    <scope>NUCLEOTIDE SEQUENCE [LARGE SCALE MRNA] (ISOFORM 2)</scope>
    <source>
        <strain>cv. Nipponbare</strain>
    </source>
</reference>
<reference key="6">
    <citation type="journal article" date="2005" name="Plant J.">
        <title>EGY1 encodes a membrane-associated and ATP-independent metalloprotease that is required for chloroplast development.</title>
        <authorList>
            <person name="Chen G."/>
            <person name="Bi Y.R."/>
            <person name="Li N."/>
        </authorList>
    </citation>
    <scope>GENE FAMILY</scope>
</reference>
<dbReference type="EC" id="3.4.24.-"/>
<dbReference type="EMBL" id="AC090871">
    <property type="protein sequence ID" value="AAO37991.2"/>
    <property type="molecule type" value="Genomic_DNA"/>
</dbReference>
<dbReference type="EMBL" id="DP000009">
    <property type="protein sequence ID" value="ABF99299.1"/>
    <property type="molecule type" value="Genomic_DNA"/>
</dbReference>
<dbReference type="EMBL" id="DP000009">
    <property type="protein sequence ID" value="ABF99300.1"/>
    <property type="molecule type" value="Genomic_DNA"/>
</dbReference>
<dbReference type="EMBL" id="AP008209">
    <property type="protein sequence ID" value="BAF13437.1"/>
    <property type="status" value="ALT_SEQ"/>
    <property type="molecule type" value="Genomic_DNA"/>
</dbReference>
<dbReference type="EMBL" id="AP014959">
    <property type="protein sequence ID" value="BAS86794.1"/>
    <property type="molecule type" value="Genomic_DNA"/>
</dbReference>
<dbReference type="EMBL" id="AK064808">
    <property type="protein sequence ID" value="BAG89215.1"/>
    <property type="molecule type" value="mRNA"/>
</dbReference>
<dbReference type="RefSeq" id="XP_015630593.1">
    <property type="nucleotide sequence ID" value="XM_015775107.1"/>
</dbReference>
<dbReference type="FunCoup" id="Q852K0">
    <property type="interactions" value="595"/>
</dbReference>
<dbReference type="STRING" id="39947.Q852K0"/>
<dbReference type="PaxDb" id="39947-Q852K0"/>
<dbReference type="KEGG" id="dosa:Os03g0792400"/>
<dbReference type="eggNOG" id="ENOG502QUAP">
    <property type="taxonomic scope" value="Eukaryota"/>
</dbReference>
<dbReference type="HOGENOM" id="CLU_028221_1_1_1"/>
<dbReference type="InParanoid" id="Q852K0"/>
<dbReference type="OMA" id="NAIDPPD"/>
<dbReference type="OrthoDB" id="195057at2759"/>
<dbReference type="Proteomes" id="UP000000763">
    <property type="component" value="Chromosome 3"/>
</dbReference>
<dbReference type="Proteomes" id="UP000059680">
    <property type="component" value="Chromosome 3"/>
</dbReference>
<dbReference type="GO" id="GO:0031969">
    <property type="term" value="C:chloroplast membrane"/>
    <property type="evidence" value="ECO:0007669"/>
    <property type="project" value="UniProtKB-SubCell"/>
</dbReference>
<dbReference type="GO" id="GO:0008237">
    <property type="term" value="F:metallopeptidase activity"/>
    <property type="evidence" value="ECO:0007669"/>
    <property type="project" value="UniProtKB-KW"/>
</dbReference>
<dbReference type="GO" id="GO:0006508">
    <property type="term" value="P:proteolysis"/>
    <property type="evidence" value="ECO:0007669"/>
    <property type="project" value="UniProtKB-KW"/>
</dbReference>
<dbReference type="CDD" id="cd06160">
    <property type="entry name" value="S2P-M50_like_2"/>
    <property type="match status" value="1"/>
</dbReference>
<dbReference type="InterPro" id="IPR044838">
    <property type="entry name" value="EGY1-like"/>
</dbReference>
<dbReference type="InterPro" id="IPR008915">
    <property type="entry name" value="Peptidase_M50"/>
</dbReference>
<dbReference type="PANTHER" id="PTHR31412">
    <property type="entry name" value="ZINC METALLOPROTEASE EGY1"/>
    <property type="match status" value="1"/>
</dbReference>
<dbReference type="PANTHER" id="PTHR31412:SF0">
    <property type="entry name" value="ZINC METALLOPROTEASE EGY1, CHLOROPLASTIC-RELATED"/>
    <property type="match status" value="1"/>
</dbReference>
<dbReference type="Pfam" id="PF02163">
    <property type="entry name" value="Peptidase_M50"/>
    <property type="match status" value="1"/>
</dbReference>
<name>EGY1_ORYSJ</name>
<feature type="transit peptide" description="Chloroplast" evidence="2">
    <location>
        <begin position="1"/>
        <end position="44"/>
    </location>
</feature>
<feature type="chain" id="PRO_0000428646" description="Probable zinc metalloprotease EGY1, chloroplastic">
    <location>
        <begin position="45"/>
        <end position="579"/>
    </location>
</feature>
<feature type="transmembrane region" description="Helical" evidence="2">
    <location>
        <begin position="272"/>
        <end position="292"/>
    </location>
</feature>
<feature type="transmembrane region" description="Helical" evidence="2">
    <location>
        <begin position="321"/>
        <end position="341"/>
    </location>
</feature>
<feature type="transmembrane region" description="Helical" evidence="2">
    <location>
        <begin position="357"/>
        <end position="377"/>
    </location>
</feature>
<feature type="transmembrane region" description="Helical" evidence="2">
    <location>
        <begin position="392"/>
        <end position="412"/>
    </location>
</feature>
<feature type="transmembrane region" description="Helical" evidence="2">
    <location>
        <begin position="419"/>
        <end position="439"/>
    </location>
</feature>
<feature type="transmembrane region" description="Helical" evidence="2">
    <location>
        <begin position="452"/>
        <end position="472"/>
    </location>
</feature>
<feature type="transmembrane region" description="Helical" evidence="2">
    <location>
        <begin position="505"/>
        <end position="525"/>
    </location>
</feature>
<feature type="transmembrane region" description="Helical" evidence="2">
    <location>
        <begin position="547"/>
        <end position="567"/>
    </location>
</feature>
<feature type="region of interest" description="Disordered" evidence="3">
    <location>
        <begin position="1"/>
        <end position="42"/>
    </location>
</feature>
<feature type="region of interest" description="Disordered" evidence="3">
    <location>
        <begin position="78"/>
        <end position="146"/>
    </location>
</feature>
<feature type="compositionally biased region" description="Low complexity" evidence="3">
    <location>
        <begin position="16"/>
        <end position="42"/>
    </location>
</feature>
<feature type="compositionally biased region" description="Gly residues" evidence="3">
    <location>
        <begin position="78"/>
        <end position="92"/>
    </location>
</feature>
<feature type="compositionally biased region" description="Low complexity" evidence="3">
    <location>
        <begin position="104"/>
        <end position="115"/>
    </location>
</feature>
<feature type="compositionally biased region" description="Low complexity" evidence="3">
    <location>
        <begin position="125"/>
        <end position="137"/>
    </location>
</feature>
<feature type="splice variant" id="VSP_054026" description="In isoform 2." evidence="4">
    <location>
        <begin position="1"/>
        <end position="117"/>
    </location>
</feature>
<keyword id="KW-0025">Alternative splicing</keyword>
<keyword id="KW-0150">Chloroplast</keyword>
<keyword id="KW-0378">Hydrolase</keyword>
<keyword id="KW-0472">Membrane</keyword>
<keyword id="KW-0482">Metalloprotease</keyword>
<keyword id="KW-0934">Plastid</keyword>
<keyword id="KW-0645">Protease</keyword>
<keyword id="KW-1185">Reference proteome</keyword>
<keyword id="KW-0809">Transit peptide</keyword>
<keyword id="KW-0812">Transmembrane</keyword>
<keyword id="KW-1133">Transmembrane helix</keyword>
<proteinExistence type="evidence at transcript level"/>
<comment type="function">
    <text evidence="1">Probable membrane-associated metalloprotease that may be involved in chloroplast development.</text>
</comment>
<comment type="subcellular location">
    <subcellularLocation>
        <location evidence="5">Plastid</location>
        <location evidence="5">Chloroplast membrane</location>
        <topology evidence="5">Multi-pass membrane protein</topology>
    </subcellularLocation>
</comment>
<comment type="alternative products">
    <event type="alternative splicing"/>
    <isoform>
        <id>Q852K0-1</id>
        <name>1</name>
        <sequence type="displayed"/>
    </isoform>
    <isoform>
        <id>Q852K0-2</id>
        <name>2</name>
        <sequence type="described" ref="VSP_054026"/>
    </isoform>
</comment>
<comment type="similarity">
    <text evidence="5">Belongs to the peptidase M50B family.</text>
</comment>
<comment type="sequence caution" evidence="5">
    <conflict type="erroneous gene model prediction">
        <sequence resource="EMBL-CDS" id="BAF13437"/>
    </conflict>
</comment>
<protein>
    <recommendedName>
        <fullName>Probable zinc metalloprotease EGY1, chloroplastic</fullName>
        <ecNumber>3.4.24.-</ecNumber>
    </recommendedName>
    <alternativeName>
        <fullName>Protein ETHYLENE-DEPENDENT GRAVITROPISM-DEFICIENT AND YELLOW-GREEN 1</fullName>
        <shortName>OsEGY1</shortName>
    </alternativeName>
</protein>
<evidence type="ECO:0000250" key="1"/>
<evidence type="ECO:0000255" key="2"/>
<evidence type="ECO:0000256" key="3">
    <source>
        <dbReference type="SAM" id="MobiDB-lite"/>
    </source>
</evidence>
<evidence type="ECO:0000303" key="4">
    <source>
    </source>
</evidence>
<evidence type="ECO:0000305" key="5"/>
<sequence>MAAAAAALASSPMVHLTASRLRLPRPARSPAAATPSPSPASAACCSRGAACGLEWRPKSGLRALRRCEDRLRCFSIDGGGGGGGGGGGGTGGEDGEKRGEEEAAAAAEAKVGGAVEEMRSERTRSGSFSSSSSSSSGTPGISNEPPFLSFSVDNIDTVKLLELLGPEKVDSADVKAIKEKLFGYTTFWLTREEPFGDLGEGVLFIGNLRGKREEIFAKLQQQLRELTGDKYNLFMVEEPNSEGEDPRGGPRVSFGLLRREVSEPGPTTLWQYVISLLLFLLTVFSCVELGIASKISSLPPEIVTYFTDPNATGPPPDMQLLLPFVESALPVAYGVLAIQLFHEVGHFLAAFPKKVKLSIPFFIPNFTLGTFGAITQFKSILPDKKTMFDISMAGPLAGAALSFSMFSVGLLLSSNPAGASDLVEVPSKLFQGSLLLGLVSRATLGYRAMHAATVAIHPLVIAGWCGLTTTAFNMLPVGCLDGGRALQGAFGKDALFGFGLTTYSLLGLGVLGGPLSLPWGLYVLICQRTPEKPCLNDVSDVGTWRRAALIVSVFLVVLTLIPLWDELAEDLGVGLVTSF</sequence>
<organism>
    <name type="scientific">Oryza sativa subsp. japonica</name>
    <name type="common">Rice</name>
    <dbReference type="NCBI Taxonomy" id="39947"/>
    <lineage>
        <taxon>Eukaryota</taxon>
        <taxon>Viridiplantae</taxon>
        <taxon>Streptophyta</taxon>
        <taxon>Embryophyta</taxon>
        <taxon>Tracheophyta</taxon>
        <taxon>Spermatophyta</taxon>
        <taxon>Magnoliopsida</taxon>
        <taxon>Liliopsida</taxon>
        <taxon>Poales</taxon>
        <taxon>Poaceae</taxon>
        <taxon>BOP clade</taxon>
        <taxon>Oryzoideae</taxon>
        <taxon>Oryzeae</taxon>
        <taxon>Oryzinae</taxon>
        <taxon>Oryza</taxon>
        <taxon>Oryza sativa</taxon>
    </lineage>
</organism>
<accession>Q852K0</accession>
<accession>Q0DMV1</accession>